<protein>
    <recommendedName>
        <fullName>F-box protein At4g35930</fullName>
    </recommendedName>
</protein>
<dbReference type="EMBL" id="AL022373">
    <property type="protein sequence ID" value="CAA18487.1"/>
    <property type="status" value="ALT_SEQ"/>
    <property type="molecule type" value="Genomic_DNA"/>
</dbReference>
<dbReference type="EMBL" id="AL031986">
    <property type="protein sequence ID" value="CAA21479.1"/>
    <property type="status" value="ALT_SEQ"/>
    <property type="molecule type" value="Genomic_DNA"/>
</dbReference>
<dbReference type="EMBL" id="AL161588">
    <property type="protein sequence ID" value="CAB81502.1"/>
    <property type="status" value="ALT_SEQ"/>
    <property type="molecule type" value="Genomic_DNA"/>
</dbReference>
<dbReference type="EMBL" id="CP002687">
    <property type="protein sequence ID" value="AEE86592.1"/>
    <property type="molecule type" value="Genomic_DNA"/>
</dbReference>
<dbReference type="EMBL" id="BT015805">
    <property type="protein sequence ID" value="AAU94368.1"/>
    <property type="molecule type" value="mRNA"/>
</dbReference>
<dbReference type="EMBL" id="BT020185">
    <property type="protein sequence ID" value="AAV43787.1"/>
    <property type="molecule type" value="mRNA"/>
</dbReference>
<dbReference type="PIR" id="T04703">
    <property type="entry name" value="T04703"/>
</dbReference>
<dbReference type="RefSeq" id="NP_195318.2">
    <property type="nucleotide sequence ID" value="NM_119760.5"/>
</dbReference>
<dbReference type="SMR" id="Q5XF11"/>
<dbReference type="FunCoup" id="Q5XF11">
    <property type="interactions" value="789"/>
</dbReference>
<dbReference type="STRING" id="3702.Q5XF11"/>
<dbReference type="iPTMnet" id="Q5XF11"/>
<dbReference type="PaxDb" id="3702-AT4G35930.1"/>
<dbReference type="ProteomicsDB" id="230890"/>
<dbReference type="EnsemblPlants" id="AT4G35930.1">
    <property type="protein sequence ID" value="AT4G35930.1"/>
    <property type="gene ID" value="AT4G35930"/>
</dbReference>
<dbReference type="GeneID" id="829748"/>
<dbReference type="Gramene" id="AT4G35930.1">
    <property type="protein sequence ID" value="AT4G35930.1"/>
    <property type="gene ID" value="AT4G35930"/>
</dbReference>
<dbReference type="KEGG" id="ath:AT4G35930"/>
<dbReference type="Araport" id="AT4G35930"/>
<dbReference type="TAIR" id="AT4G35930">
    <property type="gene designation" value="FBS4"/>
</dbReference>
<dbReference type="eggNOG" id="ENOG502QTVG">
    <property type="taxonomic scope" value="Eukaryota"/>
</dbReference>
<dbReference type="HOGENOM" id="CLU_062529_0_0_1"/>
<dbReference type="InParanoid" id="Q5XF11"/>
<dbReference type="OrthoDB" id="514005at2759"/>
<dbReference type="PhylomeDB" id="Q5XF11"/>
<dbReference type="PRO" id="PR:Q5XF11"/>
<dbReference type="Proteomes" id="UP000006548">
    <property type="component" value="Chromosome 4"/>
</dbReference>
<dbReference type="ExpressionAtlas" id="Q5XF11">
    <property type="expression patterns" value="baseline and differential"/>
</dbReference>
<dbReference type="GO" id="GO:0005737">
    <property type="term" value="C:cytoplasm"/>
    <property type="evidence" value="ECO:0000314"/>
    <property type="project" value="TAIR"/>
</dbReference>
<dbReference type="GO" id="GO:0005634">
    <property type="term" value="C:nucleus"/>
    <property type="evidence" value="ECO:0000314"/>
    <property type="project" value="TAIR"/>
</dbReference>
<dbReference type="InterPro" id="IPR001810">
    <property type="entry name" value="F-box_dom"/>
</dbReference>
<dbReference type="InterPro" id="IPR045286">
    <property type="entry name" value="FBS1-like"/>
</dbReference>
<dbReference type="PANTHER" id="PTHR34049:SF2">
    <property type="entry name" value="F-BOX DOMAIN CONTAINING PROTEIN, EXPRESSED"/>
    <property type="match status" value="1"/>
</dbReference>
<dbReference type="PANTHER" id="PTHR34049">
    <property type="entry name" value="F-BOX PROTEIN SKIP27"/>
    <property type="match status" value="1"/>
</dbReference>
<dbReference type="PROSITE" id="PS50181">
    <property type="entry name" value="FBOX"/>
    <property type="match status" value="1"/>
</dbReference>
<keyword id="KW-1185">Reference proteome</keyword>
<reference key="1">
    <citation type="journal article" date="1999" name="Nature">
        <title>Sequence and analysis of chromosome 4 of the plant Arabidopsis thaliana.</title>
        <authorList>
            <person name="Mayer K.F.X."/>
            <person name="Schueller C."/>
            <person name="Wambutt R."/>
            <person name="Murphy G."/>
            <person name="Volckaert G."/>
            <person name="Pohl T."/>
            <person name="Duesterhoeft A."/>
            <person name="Stiekema W."/>
            <person name="Entian K.-D."/>
            <person name="Terryn N."/>
            <person name="Harris B."/>
            <person name="Ansorge W."/>
            <person name="Brandt P."/>
            <person name="Grivell L.A."/>
            <person name="Rieger M."/>
            <person name="Weichselgartner M."/>
            <person name="de Simone V."/>
            <person name="Obermaier B."/>
            <person name="Mache R."/>
            <person name="Mueller M."/>
            <person name="Kreis M."/>
            <person name="Delseny M."/>
            <person name="Puigdomenech P."/>
            <person name="Watson M."/>
            <person name="Schmidtheini T."/>
            <person name="Reichert B."/>
            <person name="Portetelle D."/>
            <person name="Perez-Alonso M."/>
            <person name="Boutry M."/>
            <person name="Bancroft I."/>
            <person name="Vos P."/>
            <person name="Hoheisel J."/>
            <person name="Zimmermann W."/>
            <person name="Wedler H."/>
            <person name="Ridley P."/>
            <person name="Langham S.-A."/>
            <person name="McCullagh B."/>
            <person name="Bilham L."/>
            <person name="Robben J."/>
            <person name="van der Schueren J."/>
            <person name="Grymonprez B."/>
            <person name="Chuang Y.-J."/>
            <person name="Vandenbussche F."/>
            <person name="Braeken M."/>
            <person name="Weltjens I."/>
            <person name="Voet M."/>
            <person name="Bastiaens I."/>
            <person name="Aert R."/>
            <person name="Defoor E."/>
            <person name="Weitzenegger T."/>
            <person name="Bothe G."/>
            <person name="Ramsperger U."/>
            <person name="Hilbert H."/>
            <person name="Braun M."/>
            <person name="Holzer E."/>
            <person name="Brandt A."/>
            <person name="Peters S."/>
            <person name="van Staveren M."/>
            <person name="Dirkse W."/>
            <person name="Mooijman P."/>
            <person name="Klein Lankhorst R."/>
            <person name="Rose M."/>
            <person name="Hauf J."/>
            <person name="Koetter P."/>
            <person name="Berneiser S."/>
            <person name="Hempel S."/>
            <person name="Feldpausch M."/>
            <person name="Lamberth S."/>
            <person name="Van den Daele H."/>
            <person name="De Keyser A."/>
            <person name="Buysshaert C."/>
            <person name="Gielen J."/>
            <person name="Villarroel R."/>
            <person name="De Clercq R."/>
            <person name="van Montagu M."/>
            <person name="Rogers J."/>
            <person name="Cronin A."/>
            <person name="Quail M.A."/>
            <person name="Bray-Allen S."/>
            <person name="Clark L."/>
            <person name="Doggett J."/>
            <person name="Hall S."/>
            <person name="Kay M."/>
            <person name="Lennard N."/>
            <person name="McLay K."/>
            <person name="Mayes R."/>
            <person name="Pettett A."/>
            <person name="Rajandream M.A."/>
            <person name="Lyne M."/>
            <person name="Benes V."/>
            <person name="Rechmann S."/>
            <person name="Borkova D."/>
            <person name="Bloecker H."/>
            <person name="Scharfe M."/>
            <person name="Grimm M."/>
            <person name="Loehnert T.-H."/>
            <person name="Dose S."/>
            <person name="de Haan M."/>
            <person name="Maarse A.C."/>
            <person name="Schaefer M."/>
            <person name="Mueller-Auer S."/>
            <person name="Gabel C."/>
            <person name="Fuchs M."/>
            <person name="Fartmann B."/>
            <person name="Granderath K."/>
            <person name="Dauner D."/>
            <person name="Herzl A."/>
            <person name="Neumann S."/>
            <person name="Argiriou A."/>
            <person name="Vitale D."/>
            <person name="Liguori R."/>
            <person name="Piravandi E."/>
            <person name="Massenet O."/>
            <person name="Quigley F."/>
            <person name="Clabauld G."/>
            <person name="Muendlein A."/>
            <person name="Felber R."/>
            <person name="Schnabl S."/>
            <person name="Hiller R."/>
            <person name="Schmidt W."/>
            <person name="Lecharny A."/>
            <person name="Aubourg S."/>
            <person name="Chefdor F."/>
            <person name="Cooke R."/>
            <person name="Berger C."/>
            <person name="Monfort A."/>
            <person name="Casacuberta E."/>
            <person name="Gibbons T."/>
            <person name="Weber N."/>
            <person name="Vandenbol M."/>
            <person name="Bargues M."/>
            <person name="Terol J."/>
            <person name="Torres A."/>
            <person name="Perez-Perez A."/>
            <person name="Purnelle B."/>
            <person name="Bent E."/>
            <person name="Johnson S."/>
            <person name="Tacon D."/>
            <person name="Jesse T."/>
            <person name="Heijnen L."/>
            <person name="Schwarz S."/>
            <person name="Scholler P."/>
            <person name="Heber S."/>
            <person name="Francs P."/>
            <person name="Bielke C."/>
            <person name="Frishman D."/>
            <person name="Haase D."/>
            <person name="Lemcke K."/>
            <person name="Mewes H.-W."/>
            <person name="Stocker S."/>
            <person name="Zaccaria P."/>
            <person name="Bevan M."/>
            <person name="Wilson R.K."/>
            <person name="de la Bastide M."/>
            <person name="Habermann K."/>
            <person name="Parnell L."/>
            <person name="Dedhia N."/>
            <person name="Gnoj L."/>
            <person name="Schutz K."/>
            <person name="Huang E."/>
            <person name="Spiegel L."/>
            <person name="Sekhon M."/>
            <person name="Murray J."/>
            <person name="Sheet P."/>
            <person name="Cordes M."/>
            <person name="Abu-Threideh J."/>
            <person name="Stoneking T."/>
            <person name="Kalicki J."/>
            <person name="Graves T."/>
            <person name="Harmon G."/>
            <person name="Edwards J."/>
            <person name="Latreille P."/>
            <person name="Courtney L."/>
            <person name="Cloud J."/>
            <person name="Abbott A."/>
            <person name="Scott K."/>
            <person name="Johnson D."/>
            <person name="Minx P."/>
            <person name="Bentley D."/>
            <person name="Fulton B."/>
            <person name="Miller N."/>
            <person name="Greco T."/>
            <person name="Kemp K."/>
            <person name="Kramer J."/>
            <person name="Fulton L."/>
            <person name="Mardis E."/>
            <person name="Dante M."/>
            <person name="Pepin K."/>
            <person name="Hillier L.W."/>
            <person name="Nelson J."/>
            <person name="Spieth J."/>
            <person name="Ryan E."/>
            <person name="Andrews S."/>
            <person name="Geisel C."/>
            <person name="Layman D."/>
            <person name="Du H."/>
            <person name="Ali J."/>
            <person name="Berghoff A."/>
            <person name="Jones K."/>
            <person name="Drone K."/>
            <person name="Cotton M."/>
            <person name="Joshu C."/>
            <person name="Antonoiu B."/>
            <person name="Zidanic M."/>
            <person name="Strong C."/>
            <person name="Sun H."/>
            <person name="Lamar B."/>
            <person name="Yordan C."/>
            <person name="Ma P."/>
            <person name="Zhong J."/>
            <person name="Preston R."/>
            <person name="Vil D."/>
            <person name="Shekher M."/>
            <person name="Matero A."/>
            <person name="Shah R."/>
            <person name="Swaby I.K."/>
            <person name="O'Shaughnessy A."/>
            <person name="Rodriguez M."/>
            <person name="Hoffman J."/>
            <person name="Till S."/>
            <person name="Granat S."/>
            <person name="Shohdy N."/>
            <person name="Hasegawa A."/>
            <person name="Hameed A."/>
            <person name="Lodhi M."/>
            <person name="Johnson A."/>
            <person name="Chen E."/>
            <person name="Marra M.A."/>
            <person name="Martienssen R."/>
            <person name="McCombie W.R."/>
        </authorList>
    </citation>
    <scope>NUCLEOTIDE SEQUENCE [LARGE SCALE GENOMIC DNA]</scope>
    <source>
        <strain>cv. Columbia</strain>
    </source>
</reference>
<reference key="2">
    <citation type="journal article" date="2017" name="Plant J.">
        <title>Araport11: a complete reannotation of the Arabidopsis thaliana reference genome.</title>
        <authorList>
            <person name="Cheng C.Y."/>
            <person name="Krishnakumar V."/>
            <person name="Chan A.P."/>
            <person name="Thibaud-Nissen F."/>
            <person name="Schobel S."/>
            <person name="Town C.D."/>
        </authorList>
    </citation>
    <scope>GENOME REANNOTATION</scope>
    <source>
        <strain>cv. Columbia</strain>
    </source>
</reference>
<reference key="3">
    <citation type="submission" date="2004-11" db="EMBL/GenBank/DDBJ databases">
        <title>Arabidopsis ORF clones.</title>
        <authorList>
            <person name="Shinn P."/>
            <person name="Chen H."/>
            <person name="Cheuk R.F."/>
            <person name="Kim C.J."/>
            <person name="Ecker J.R."/>
        </authorList>
    </citation>
    <scope>NUCLEOTIDE SEQUENCE [LARGE SCALE MRNA]</scope>
    <source>
        <strain>cv. Columbia</strain>
    </source>
</reference>
<sequence>MGKVSPKDLDSKTSVRKKKLKSSSNKYLKPGALVQLCYSKASAAKSCNELGKKRVPVFDTKSCNDLGKKRVPVFDIKHARNNKMAVEQLNSPKSPLMLSPVNVVKRSTLVRPMKFDDLQVESNNTCKKSPLMLSPMGIVMQNTLLRTPKTPQADPCVSESQLESLPMDLLVKIVCHLHHDQLKAVFHVSQRIRMATILARQYHFNYTTPDRSRQEMLRVMTPVPINRWPFRRGDGNPTMVSSPHTPKAPKHAPRPPSRTKLAEMKQITAVLFQDQTPFPSRCIVPSVLQRPTLFKPMAPKHPRVLFYEDELCQAVAQNNLT</sequence>
<feature type="chain" id="PRO_0000283515" description="F-box protein At4g35930">
    <location>
        <begin position="1"/>
        <end position="321"/>
    </location>
</feature>
<feature type="domain" description="F-box" evidence="1">
    <location>
        <begin position="159"/>
        <end position="207"/>
    </location>
</feature>
<feature type="region of interest" description="Disordered" evidence="2">
    <location>
        <begin position="1"/>
        <end position="23"/>
    </location>
</feature>
<feature type="region of interest" description="Disordered" evidence="2">
    <location>
        <begin position="228"/>
        <end position="258"/>
    </location>
</feature>
<feature type="compositionally biased region" description="Basic and acidic residues" evidence="2">
    <location>
        <begin position="1"/>
        <end position="13"/>
    </location>
</feature>
<organism>
    <name type="scientific">Arabidopsis thaliana</name>
    <name type="common">Mouse-ear cress</name>
    <dbReference type="NCBI Taxonomy" id="3702"/>
    <lineage>
        <taxon>Eukaryota</taxon>
        <taxon>Viridiplantae</taxon>
        <taxon>Streptophyta</taxon>
        <taxon>Embryophyta</taxon>
        <taxon>Tracheophyta</taxon>
        <taxon>Spermatophyta</taxon>
        <taxon>Magnoliopsida</taxon>
        <taxon>eudicotyledons</taxon>
        <taxon>Gunneridae</taxon>
        <taxon>Pentapetalae</taxon>
        <taxon>rosids</taxon>
        <taxon>malvids</taxon>
        <taxon>Brassicales</taxon>
        <taxon>Brassicaceae</taxon>
        <taxon>Camelineae</taxon>
        <taxon>Arabidopsis</taxon>
    </lineage>
</organism>
<name>FB248_ARATH</name>
<comment type="sequence caution" evidence="3">
    <conflict type="erroneous gene model prediction">
        <sequence resource="EMBL-CDS" id="CAA18487"/>
    </conflict>
</comment>
<comment type="sequence caution" evidence="3">
    <conflict type="erroneous gene model prediction">
        <sequence resource="EMBL-CDS" id="CAA21479"/>
    </conflict>
</comment>
<comment type="sequence caution" evidence="3">
    <conflict type="erroneous gene model prediction">
        <sequence resource="EMBL-CDS" id="CAB81502"/>
    </conflict>
</comment>
<gene>
    <name type="ordered locus">At4g35930</name>
    <name type="ORF">T19K4.60</name>
</gene>
<evidence type="ECO:0000255" key="1">
    <source>
        <dbReference type="PROSITE-ProRule" id="PRU00080"/>
    </source>
</evidence>
<evidence type="ECO:0000256" key="2">
    <source>
        <dbReference type="SAM" id="MobiDB-lite"/>
    </source>
</evidence>
<evidence type="ECO:0000305" key="3"/>
<proteinExistence type="evidence at transcript level"/>
<accession>Q5XF11</accession>
<accession>O65630</accession>